<organism>
    <name type="scientific">Shigella flexneri</name>
    <dbReference type="NCBI Taxonomy" id="623"/>
    <lineage>
        <taxon>Bacteria</taxon>
        <taxon>Pseudomonadati</taxon>
        <taxon>Pseudomonadota</taxon>
        <taxon>Gammaproteobacteria</taxon>
        <taxon>Enterobacterales</taxon>
        <taxon>Enterobacteriaceae</taxon>
        <taxon>Shigella</taxon>
    </lineage>
</organism>
<dbReference type="EC" id="3.6.1.-" evidence="1"/>
<dbReference type="EMBL" id="AE005674">
    <property type="protein sequence ID" value="AAN42047.1"/>
    <property type="status" value="ALT_INIT"/>
    <property type="molecule type" value="Genomic_DNA"/>
</dbReference>
<dbReference type="EMBL" id="AE014073">
    <property type="protein sequence ID" value="AAP15924.1"/>
    <property type="status" value="ALT_INIT"/>
    <property type="molecule type" value="Genomic_DNA"/>
</dbReference>
<dbReference type="RefSeq" id="NP_706340.1">
    <property type="nucleotide sequence ID" value="NC_004337.2"/>
</dbReference>
<dbReference type="RefSeq" id="WP_005053018.1">
    <property type="nucleotide sequence ID" value="NZ_WPGW01000052.1"/>
</dbReference>
<dbReference type="SMR" id="Q83M49"/>
<dbReference type="STRING" id="198214.SF0391"/>
<dbReference type="PaxDb" id="198214-SF0391"/>
<dbReference type="GeneID" id="1027688"/>
<dbReference type="KEGG" id="sfl:SF0391"/>
<dbReference type="KEGG" id="sfx:S0397"/>
<dbReference type="PATRIC" id="fig|198214.7.peg.449"/>
<dbReference type="HOGENOM" id="CLU_044146_5_2_6"/>
<dbReference type="Proteomes" id="UP000001006">
    <property type="component" value="Chromosome"/>
</dbReference>
<dbReference type="Proteomes" id="UP000002673">
    <property type="component" value="Chromosome"/>
</dbReference>
<dbReference type="GO" id="GO:0002145">
    <property type="term" value="F:4-amino-5-hydroxymethyl-2-methylpyrimidine diphosphatase activity"/>
    <property type="evidence" value="ECO:0007669"/>
    <property type="project" value="RHEA"/>
</dbReference>
<dbReference type="GO" id="GO:0000287">
    <property type="term" value="F:magnesium ion binding"/>
    <property type="evidence" value="ECO:0000250"/>
    <property type="project" value="UniProtKB"/>
</dbReference>
<dbReference type="GO" id="GO:0016791">
    <property type="term" value="F:phosphatase activity"/>
    <property type="evidence" value="ECO:0000250"/>
    <property type="project" value="UniProtKB"/>
</dbReference>
<dbReference type="CDD" id="cd07516">
    <property type="entry name" value="HAD_Pase"/>
    <property type="match status" value="1"/>
</dbReference>
<dbReference type="FunFam" id="3.30.1240.10:FF:000002">
    <property type="entry name" value="HMP-PP phosphatase"/>
    <property type="match status" value="1"/>
</dbReference>
<dbReference type="Gene3D" id="3.30.1240.10">
    <property type="match status" value="1"/>
</dbReference>
<dbReference type="Gene3D" id="3.40.50.1000">
    <property type="entry name" value="HAD superfamily/HAD-like"/>
    <property type="match status" value="1"/>
</dbReference>
<dbReference type="HAMAP" id="MF_01847">
    <property type="entry name" value="HMP_PP_phosphat"/>
    <property type="match status" value="1"/>
</dbReference>
<dbReference type="InterPro" id="IPR000150">
    <property type="entry name" value="Cof"/>
</dbReference>
<dbReference type="InterPro" id="IPR036412">
    <property type="entry name" value="HAD-like_sf"/>
</dbReference>
<dbReference type="InterPro" id="IPR006379">
    <property type="entry name" value="HAD-SF_hydro_IIB"/>
</dbReference>
<dbReference type="InterPro" id="IPR023214">
    <property type="entry name" value="HAD_sf"/>
</dbReference>
<dbReference type="InterPro" id="IPR023938">
    <property type="entry name" value="HMP-PP_phosphatase"/>
</dbReference>
<dbReference type="NCBIfam" id="TIGR00099">
    <property type="entry name" value="Cof-subfamily"/>
    <property type="match status" value="1"/>
</dbReference>
<dbReference type="NCBIfam" id="TIGR01484">
    <property type="entry name" value="HAD-SF-IIB"/>
    <property type="match status" value="1"/>
</dbReference>
<dbReference type="NCBIfam" id="NF011705">
    <property type="entry name" value="PRK15126.1"/>
    <property type="match status" value="1"/>
</dbReference>
<dbReference type="PANTHER" id="PTHR47267">
    <property type="match status" value="1"/>
</dbReference>
<dbReference type="PANTHER" id="PTHR47267:SF2">
    <property type="entry name" value="HMP-PP PHOSPHATASE"/>
    <property type="match status" value="1"/>
</dbReference>
<dbReference type="Pfam" id="PF08282">
    <property type="entry name" value="Hydrolase_3"/>
    <property type="match status" value="1"/>
</dbReference>
<dbReference type="SFLD" id="SFLDG01140">
    <property type="entry name" value="C2.B:_Phosphomannomutase_and_P"/>
    <property type="match status" value="1"/>
</dbReference>
<dbReference type="SFLD" id="SFLDS00003">
    <property type="entry name" value="Haloacid_Dehalogenase"/>
    <property type="match status" value="1"/>
</dbReference>
<dbReference type="SUPFAM" id="SSF56784">
    <property type="entry name" value="HAD-like"/>
    <property type="match status" value="1"/>
</dbReference>
<dbReference type="PROSITE" id="PS01228">
    <property type="entry name" value="COF_1"/>
    <property type="match status" value="1"/>
</dbReference>
<dbReference type="PROSITE" id="PS01229">
    <property type="entry name" value="COF_2"/>
    <property type="match status" value="1"/>
</dbReference>
<sequence length="272" mass="30402">MARLVAFDMDGTLLMPDHHLGEKTLSTLARLRERDITLTFATGRHALEMQHILGALSLDAYLITGNGTRVHSLEGELLHRDDLPADVAELVLYQQWDTRASMHIFNDDGWFTGKESPALLQVFVYSGFRYQIIDVKKMPLGSVTKICFCGDHDDLTRLQIQLYEALGERAHLCFSATDCLEVLPVGCNKGAALTVRTQHLGLSLRDCMAFGDAMNDREMLGSVGSGFIMGNAMPQLRAELPHLPVIGHCRNQAVSHYLTHWLDYPHLPYSPE</sequence>
<feature type="chain" id="PRO_0000342997" description="HMP-PP phosphatase">
    <location>
        <begin position="1"/>
        <end position="272"/>
    </location>
</feature>
<feature type="active site" description="Nucleophile" evidence="1">
    <location>
        <position position="8"/>
    </location>
</feature>
<feature type="binding site" evidence="1">
    <location>
        <position position="8"/>
    </location>
    <ligand>
        <name>Mg(2+)</name>
        <dbReference type="ChEBI" id="CHEBI:18420"/>
    </ligand>
</feature>
<feature type="binding site" evidence="1">
    <location>
        <position position="10"/>
    </location>
    <ligand>
        <name>Mg(2+)</name>
        <dbReference type="ChEBI" id="CHEBI:18420"/>
    </ligand>
</feature>
<feature type="binding site" evidence="1">
    <location>
        <position position="212"/>
    </location>
    <ligand>
        <name>Mg(2+)</name>
        <dbReference type="ChEBI" id="CHEBI:18420"/>
    </ligand>
</feature>
<evidence type="ECO:0000255" key="1">
    <source>
        <dbReference type="HAMAP-Rule" id="MF_01847"/>
    </source>
</evidence>
<evidence type="ECO:0000305" key="2"/>
<protein>
    <recommendedName>
        <fullName evidence="1">HMP-PP phosphatase</fullName>
        <ecNumber evidence="1">3.6.1.-</ecNumber>
    </recommendedName>
</protein>
<accession>Q83M49</accession>
<accession>Q7C2X7</accession>
<reference key="1">
    <citation type="journal article" date="2002" name="Nucleic Acids Res.">
        <title>Genome sequence of Shigella flexneri 2a: insights into pathogenicity through comparison with genomes of Escherichia coli K12 and O157.</title>
        <authorList>
            <person name="Jin Q."/>
            <person name="Yuan Z."/>
            <person name="Xu J."/>
            <person name="Wang Y."/>
            <person name="Shen Y."/>
            <person name="Lu W."/>
            <person name="Wang J."/>
            <person name="Liu H."/>
            <person name="Yang J."/>
            <person name="Yang F."/>
            <person name="Zhang X."/>
            <person name="Zhang J."/>
            <person name="Yang G."/>
            <person name="Wu H."/>
            <person name="Qu D."/>
            <person name="Dong J."/>
            <person name="Sun L."/>
            <person name="Xue Y."/>
            <person name="Zhao A."/>
            <person name="Gao Y."/>
            <person name="Zhu J."/>
            <person name="Kan B."/>
            <person name="Ding K."/>
            <person name="Chen S."/>
            <person name="Cheng H."/>
            <person name="Yao Z."/>
            <person name="He B."/>
            <person name="Chen R."/>
            <person name="Ma D."/>
            <person name="Qiang B."/>
            <person name="Wen Y."/>
            <person name="Hou Y."/>
            <person name="Yu J."/>
        </authorList>
    </citation>
    <scope>NUCLEOTIDE SEQUENCE [LARGE SCALE GENOMIC DNA]</scope>
    <source>
        <strain>301 / Serotype 2a</strain>
    </source>
</reference>
<reference key="2">
    <citation type="journal article" date="2003" name="Infect. Immun.">
        <title>Complete genome sequence and comparative genomics of Shigella flexneri serotype 2a strain 2457T.</title>
        <authorList>
            <person name="Wei J."/>
            <person name="Goldberg M.B."/>
            <person name="Burland V."/>
            <person name="Venkatesan M.M."/>
            <person name="Deng W."/>
            <person name="Fournier G."/>
            <person name="Mayhew G.F."/>
            <person name="Plunkett G. III"/>
            <person name="Rose D.J."/>
            <person name="Darling A."/>
            <person name="Mau B."/>
            <person name="Perna N.T."/>
            <person name="Payne S.M."/>
            <person name="Runyen-Janecky L.J."/>
            <person name="Zhou S."/>
            <person name="Schwartz D.C."/>
            <person name="Blattner F.R."/>
        </authorList>
    </citation>
    <scope>NUCLEOTIDE SEQUENCE [LARGE SCALE GENOMIC DNA]</scope>
    <source>
        <strain>ATCC 700930 / 2457T / Serotype 2a</strain>
    </source>
</reference>
<name>COF_SHIFL</name>
<proteinExistence type="inferred from homology"/>
<gene>
    <name evidence="1" type="primary">cof</name>
    <name type="ordered locus">SF0391</name>
    <name type="ordered locus">S0397</name>
</gene>
<comment type="function">
    <text evidence="1">Catalyzes the hydrolysis of 4-amino-2-methyl-5-hydroxymethylpyrimidine pyrophosphate (HMP-PP) to 4-amino-2-methyl-5-hydroxymethylpyrimidine phosphate (HMP-P).</text>
</comment>
<comment type="catalytic activity">
    <reaction evidence="1">
        <text>4-amino-2-methyl-5-(diphosphooxymethyl)pyrimidine + H2O = 4-amino-2-methyl-5-(phosphooxymethyl)pyrimidine + phosphate + H(+)</text>
        <dbReference type="Rhea" id="RHEA:27914"/>
        <dbReference type="ChEBI" id="CHEBI:15377"/>
        <dbReference type="ChEBI" id="CHEBI:15378"/>
        <dbReference type="ChEBI" id="CHEBI:43474"/>
        <dbReference type="ChEBI" id="CHEBI:57841"/>
        <dbReference type="ChEBI" id="CHEBI:58354"/>
    </reaction>
</comment>
<comment type="cofactor">
    <cofactor evidence="1">
        <name>Mg(2+)</name>
        <dbReference type="ChEBI" id="CHEBI:18420"/>
    </cofactor>
</comment>
<comment type="similarity">
    <text evidence="1">Belongs to the HAD-like hydrolase superfamily. Cof family.</text>
</comment>
<comment type="sequence caution" evidence="2">
    <conflict type="erroneous initiation">
        <sequence resource="EMBL-CDS" id="AAN42047"/>
    </conflict>
    <text>Extended N-terminus.</text>
</comment>
<comment type="sequence caution" evidence="2">
    <conflict type="erroneous initiation">
        <sequence resource="EMBL-CDS" id="AAP15924"/>
    </conflict>
    <text>Extended N-terminus.</text>
</comment>
<keyword id="KW-0378">Hydrolase</keyword>
<keyword id="KW-0460">Magnesium</keyword>
<keyword id="KW-0479">Metal-binding</keyword>
<keyword id="KW-1185">Reference proteome</keyword>